<sequence>MNMKGKALLAGCIALSLSNMAFAKDIKVAVVGAMSGPVAQYGDQEFTGAEQAIADINAKGGVKGDKLVMVKYDDACDPKQAVAVANKVVNDGIKYVIGHLCSSSTQPASDIYEDEGILMITPAATAPELTARGYNLVLRTTGLDSDQGPTAAKYIVEKVKPKRIAIVHDKQQYGEGLARSVQDNLKKANADVVFFDGITAGEKDFSTLVARLKKENIDFVYYGGYHPEMGQILRQARAAGLKTQFMGPEGVANVSLSNIAGESAEGLLVTKPKNYDQVPANKPIVDAIKAKKQDPSGAFVWTTYAALQSLQAGLNQSDDPAEIAKYLKANSVETVMGPLSWDAKGDLKGFEFGVFDWHANGTATDAK</sequence>
<evidence type="ECO:0000250" key="1"/>
<evidence type="ECO:0000305" key="2"/>
<proteinExistence type="inferred from homology"/>
<protein>
    <recommendedName>
        <fullName>Leu/Ile/Val-binding protein</fullName>
        <shortName>LIV-BP</shortName>
    </recommendedName>
</protein>
<gene>
    <name type="primary">livJ</name>
</gene>
<keyword id="KW-0029">Amino-acid transport</keyword>
<keyword id="KW-1015">Disulfide bond</keyword>
<keyword id="KW-0574">Periplasm</keyword>
<keyword id="KW-0732">Signal</keyword>
<keyword id="KW-0813">Transport</keyword>
<comment type="function">
    <text evidence="1">This protein is a component of the leucine, isoleucine, valine, (threonine) transport system, which is one of the two periplasmic binding protein-dependent transport systems of the high-affinity transport of the branched-chain amino acids.</text>
</comment>
<comment type="subcellular location">
    <subcellularLocation>
        <location evidence="1">Periplasm</location>
    </subcellularLocation>
</comment>
<comment type="similarity">
    <text evidence="2">Belongs to the leucine-binding protein family.</text>
</comment>
<dbReference type="EMBL" id="X58820">
    <property type="protein sequence ID" value="CAA41622.1"/>
    <property type="molecule type" value="Genomic_DNA"/>
</dbReference>
<dbReference type="PIR" id="S14619">
    <property type="entry name" value="S14619"/>
</dbReference>
<dbReference type="SMR" id="P25399"/>
<dbReference type="STRING" id="1333848.CFNIH1_04925"/>
<dbReference type="OrthoDB" id="9768386at2"/>
<dbReference type="GO" id="GO:0042597">
    <property type="term" value="C:periplasmic space"/>
    <property type="evidence" value="ECO:0007669"/>
    <property type="project" value="UniProtKB-SubCell"/>
</dbReference>
<dbReference type="GO" id="GO:0006865">
    <property type="term" value="P:amino acid transport"/>
    <property type="evidence" value="ECO:0007669"/>
    <property type="project" value="UniProtKB-KW"/>
</dbReference>
<dbReference type="CDD" id="cd06342">
    <property type="entry name" value="PBP1_ABC_LIVBP-like"/>
    <property type="match status" value="1"/>
</dbReference>
<dbReference type="FunFam" id="3.40.50.2300:FF:000033">
    <property type="entry name" value="Amino acid ABC transporter substrate-binding protein"/>
    <property type="match status" value="1"/>
</dbReference>
<dbReference type="Gene3D" id="3.40.50.2300">
    <property type="match status" value="2"/>
</dbReference>
<dbReference type="InterPro" id="IPR028081">
    <property type="entry name" value="Leu-bd"/>
</dbReference>
<dbReference type="InterPro" id="IPR000709">
    <property type="entry name" value="Leu_Ile_Val-bd"/>
</dbReference>
<dbReference type="InterPro" id="IPR028082">
    <property type="entry name" value="Peripla_BP_I"/>
</dbReference>
<dbReference type="NCBIfam" id="NF011933">
    <property type="entry name" value="PRK15404.1"/>
    <property type="match status" value="1"/>
</dbReference>
<dbReference type="PANTHER" id="PTHR47151">
    <property type="entry name" value="LEU/ILE/VAL-BINDING ABC TRANSPORTER SUBUNIT"/>
    <property type="match status" value="1"/>
</dbReference>
<dbReference type="PANTHER" id="PTHR47151:SF1">
    <property type="entry name" value="LEU_ILE_VAL-BINDING PROTEIN"/>
    <property type="match status" value="1"/>
</dbReference>
<dbReference type="Pfam" id="PF13458">
    <property type="entry name" value="Peripla_BP_6"/>
    <property type="match status" value="1"/>
</dbReference>
<dbReference type="PRINTS" id="PR00337">
    <property type="entry name" value="LEUILEVALBP"/>
</dbReference>
<dbReference type="SUPFAM" id="SSF53822">
    <property type="entry name" value="Periplasmic binding protein-like I"/>
    <property type="match status" value="1"/>
</dbReference>
<accession>P25399</accession>
<feature type="signal peptide" evidence="1">
    <location>
        <begin position="1"/>
        <end position="23"/>
    </location>
</feature>
<feature type="chain" id="PRO_0000017699" description="Leu/Ile/Val-binding protein">
    <location>
        <begin position="24"/>
        <end position="367"/>
    </location>
</feature>
<feature type="disulfide bond" evidence="1">
    <location>
        <begin position="76"/>
        <end position="101"/>
    </location>
</feature>
<organism>
    <name type="scientific">Citrobacter freundii</name>
    <dbReference type="NCBI Taxonomy" id="546"/>
    <lineage>
        <taxon>Bacteria</taxon>
        <taxon>Pseudomonadati</taxon>
        <taxon>Pseudomonadota</taxon>
        <taxon>Gammaproteobacteria</taxon>
        <taxon>Enterobacterales</taxon>
        <taxon>Enterobacteriaceae</taxon>
        <taxon>Citrobacter</taxon>
        <taxon>Citrobacter freundii complex</taxon>
    </lineage>
</organism>
<reference key="1">
    <citation type="submission" date="1991-04" db="EMBL/GenBank/DDBJ databases">
        <authorList>
            <person name="Daggett Garvin L."/>
            <person name="Hardies S.C."/>
        </authorList>
    </citation>
    <scope>NUCLEOTIDE SEQUENCE [GENOMIC DNA]</scope>
    <source>
        <strain>ATCC 8090 / DSM 30039 / JCM 1657 / LMG 3246 / NCTC 9750</strain>
    </source>
</reference>
<name>LIVJ_CITFR</name>